<name>EF1A_HELAM</name>
<evidence type="ECO:0000250" key="1"/>
<evidence type="ECO:0000255" key="2">
    <source>
        <dbReference type="PROSITE-ProRule" id="PRU01059"/>
    </source>
</evidence>
<protein>
    <recommendedName>
        <fullName>Elongation factor 1-alpha</fullName>
        <shortName>EF-1-alpha</shortName>
    </recommendedName>
</protein>
<accession>P84317</accession>
<accession>P55276</accession>
<reference key="1">
    <citation type="journal article" date="1995" name="Mol. Biol. Evol.">
        <title>A highly conserved nuclear gene for low-level phylogenetics: elongation factor-1 alpha recovers morphology-based tree for heliothine moths.</title>
        <authorList>
            <person name="Cho S."/>
            <person name="Mitchell A."/>
            <person name="Regier J.C."/>
            <person name="Mitter C."/>
            <person name="Poole R.W."/>
            <person name="Friedlander T.P."/>
            <person name="Zhao S."/>
        </authorList>
    </citation>
    <scope>NUCLEOTIDE SEQUENCE [GENOMIC DNA]</scope>
</reference>
<keyword id="KW-0963">Cytoplasm</keyword>
<keyword id="KW-0251">Elongation factor</keyword>
<keyword id="KW-0342">GTP-binding</keyword>
<keyword id="KW-0547">Nucleotide-binding</keyword>
<keyword id="KW-0597">Phosphoprotein</keyword>
<keyword id="KW-0648">Protein biosynthesis</keyword>
<organism>
    <name type="scientific">Helicoverpa armigera</name>
    <name type="common">Cotton bollworm</name>
    <name type="synonym">Heliothis armigera</name>
    <dbReference type="NCBI Taxonomy" id="29058"/>
    <lineage>
        <taxon>Eukaryota</taxon>
        <taxon>Metazoa</taxon>
        <taxon>Ecdysozoa</taxon>
        <taxon>Arthropoda</taxon>
        <taxon>Hexapoda</taxon>
        <taxon>Insecta</taxon>
        <taxon>Pterygota</taxon>
        <taxon>Neoptera</taxon>
        <taxon>Endopterygota</taxon>
        <taxon>Lepidoptera</taxon>
        <taxon>Glossata</taxon>
        <taxon>Ditrysia</taxon>
        <taxon>Noctuoidea</taxon>
        <taxon>Noctuidae</taxon>
        <taxon>Heliothinae</taxon>
        <taxon>Helicoverpa</taxon>
    </lineage>
</organism>
<feature type="chain" id="PRO_0000090909" description="Elongation factor 1-alpha">
    <location>
        <begin position="1" status="less than"/>
        <end position="413" status="greater than"/>
    </location>
</feature>
<feature type="domain" description="tr-type G" evidence="2">
    <location>
        <begin position="1" status="less than"/>
        <end position="228"/>
    </location>
</feature>
<feature type="binding site" evidence="1">
    <location>
        <begin position="1" status="less than"/>
        <end position="7"/>
    </location>
    <ligand>
        <name>GTP</name>
        <dbReference type="ChEBI" id="CHEBI:37565"/>
    </ligand>
</feature>
<feature type="binding site" evidence="1">
    <location>
        <begin position="77"/>
        <end position="81"/>
    </location>
    <ligand>
        <name>GTP</name>
        <dbReference type="ChEBI" id="CHEBI:37565"/>
    </ligand>
</feature>
<feature type="binding site" evidence="1">
    <location>
        <begin position="139"/>
        <end position="142"/>
    </location>
    <ligand>
        <name>GTP</name>
        <dbReference type="ChEBI" id="CHEBI:37565"/>
    </ligand>
</feature>
<feature type="modified residue" description="5-glutamyl glycerylphosphorylethanolamine" evidence="1">
    <location>
        <position position="287"/>
    </location>
</feature>
<feature type="modified residue" description="5-glutamyl glycerylphosphorylethanolamine" evidence="1">
    <location>
        <position position="360"/>
    </location>
</feature>
<feature type="non-terminal residue">
    <location>
        <position position="1"/>
    </location>
</feature>
<feature type="non-terminal residue">
    <location>
        <position position="413"/>
    </location>
</feature>
<proteinExistence type="inferred from homology"/>
<comment type="function">
    <text>This protein promotes the GTP-dependent binding of aminoacyl-tRNA to the A-site of ribosomes during protein biosynthesis.</text>
</comment>
<comment type="subcellular location">
    <subcellularLocation>
        <location>Cytoplasm</location>
    </subcellularLocation>
</comment>
<comment type="similarity">
    <text evidence="2">Belongs to the TRAFAC class translation factor GTPase superfamily. Classic translation factor GTPase family. EF-Tu/EF-1A subfamily.</text>
</comment>
<dbReference type="EMBL" id="U20124">
    <property type="protein sequence ID" value="AAA93204.1"/>
    <property type="molecule type" value="Genomic_DNA"/>
</dbReference>
<dbReference type="EMBL" id="U20129">
    <property type="protein sequence ID" value="AAA93209.1"/>
    <property type="molecule type" value="Genomic_DNA"/>
</dbReference>
<dbReference type="SMR" id="P84317"/>
<dbReference type="EnsemblMetazoa" id="XM_021329969.2">
    <property type="protein sequence ID" value="XP_021185644.1"/>
    <property type="gene ID" value="LOC110372934"/>
</dbReference>
<dbReference type="OrthoDB" id="342024at2759"/>
<dbReference type="GO" id="GO:0005737">
    <property type="term" value="C:cytoplasm"/>
    <property type="evidence" value="ECO:0007669"/>
    <property type="project" value="UniProtKB-SubCell"/>
</dbReference>
<dbReference type="GO" id="GO:0005525">
    <property type="term" value="F:GTP binding"/>
    <property type="evidence" value="ECO:0007669"/>
    <property type="project" value="UniProtKB-KW"/>
</dbReference>
<dbReference type="GO" id="GO:0003924">
    <property type="term" value="F:GTPase activity"/>
    <property type="evidence" value="ECO:0007669"/>
    <property type="project" value="InterPro"/>
</dbReference>
<dbReference type="GO" id="GO:0003746">
    <property type="term" value="F:translation elongation factor activity"/>
    <property type="evidence" value="ECO:0007669"/>
    <property type="project" value="UniProtKB-KW"/>
</dbReference>
<dbReference type="CDD" id="cd01883">
    <property type="entry name" value="EF1_alpha"/>
    <property type="match status" value="1"/>
</dbReference>
<dbReference type="CDD" id="cd03693">
    <property type="entry name" value="EF1_alpha_II"/>
    <property type="match status" value="1"/>
</dbReference>
<dbReference type="CDD" id="cd03705">
    <property type="entry name" value="EF1_alpha_III"/>
    <property type="match status" value="1"/>
</dbReference>
<dbReference type="FunFam" id="2.40.30.10:FF:000003">
    <property type="entry name" value="Elongation factor 1-alpha"/>
    <property type="match status" value="1"/>
</dbReference>
<dbReference type="FunFam" id="2.40.30.10:FF:000005">
    <property type="entry name" value="Elongation factor 1-alpha"/>
    <property type="match status" value="1"/>
</dbReference>
<dbReference type="FunFam" id="3.40.50.300:FF:000090">
    <property type="entry name" value="Elongation factor 1-alpha"/>
    <property type="match status" value="1"/>
</dbReference>
<dbReference type="Gene3D" id="3.40.50.300">
    <property type="entry name" value="P-loop containing nucleotide triphosphate hydrolases"/>
    <property type="match status" value="1"/>
</dbReference>
<dbReference type="Gene3D" id="2.40.30.10">
    <property type="entry name" value="Translation factors"/>
    <property type="match status" value="2"/>
</dbReference>
<dbReference type="InterPro" id="IPR004161">
    <property type="entry name" value="EFTu-like_2"/>
</dbReference>
<dbReference type="InterPro" id="IPR031157">
    <property type="entry name" value="G_TR_CS"/>
</dbReference>
<dbReference type="InterPro" id="IPR054696">
    <property type="entry name" value="GTP-eEF1A_C"/>
</dbReference>
<dbReference type="InterPro" id="IPR027417">
    <property type="entry name" value="P-loop_NTPase"/>
</dbReference>
<dbReference type="InterPro" id="IPR000795">
    <property type="entry name" value="T_Tr_GTP-bd_dom"/>
</dbReference>
<dbReference type="InterPro" id="IPR050100">
    <property type="entry name" value="TRAFAC_GTPase_members"/>
</dbReference>
<dbReference type="InterPro" id="IPR009000">
    <property type="entry name" value="Transl_B-barrel_sf"/>
</dbReference>
<dbReference type="InterPro" id="IPR009001">
    <property type="entry name" value="Transl_elong_EF1A/Init_IF2_C"/>
</dbReference>
<dbReference type="InterPro" id="IPR004539">
    <property type="entry name" value="Transl_elong_EF1A_euk/arc"/>
</dbReference>
<dbReference type="NCBIfam" id="TIGR00483">
    <property type="entry name" value="EF-1_alpha"/>
    <property type="match status" value="1"/>
</dbReference>
<dbReference type="NCBIfam" id="NF008969">
    <property type="entry name" value="PRK12317.1"/>
    <property type="match status" value="1"/>
</dbReference>
<dbReference type="PANTHER" id="PTHR23115">
    <property type="entry name" value="TRANSLATION FACTOR"/>
    <property type="match status" value="1"/>
</dbReference>
<dbReference type="Pfam" id="PF22594">
    <property type="entry name" value="GTP-eEF1A_C"/>
    <property type="match status" value="1"/>
</dbReference>
<dbReference type="Pfam" id="PF00009">
    <property type="entry name" value="GTP_EFTU"/>
    <property type="match status" value="1"/>
</dbReference>
<dbReference type="Pfam" id="PF03144">
    <property type="entry name" value="GTP_EFTU_D2"/>
    <property type="match status" value="1"/>
</dbReference>
<dbReference type="PRINTS" id="PR00315">
    <property type="entry name" value="ELONGATNFCT"/>
</dbReference>
<dbReference type="SUPFAM" id="SSF50465">
    <property type="entry name" value="EF-Tu/eEF-1alpha/eIF2-gamma C-terminal domain"/>
    <property type="match status" value="1"/>
</dbReference>
<dbReference type="SUPFAM" id="SSF52540">
    <property type="entry name" value="P-loop containing nucleoside triphosphate hydrolases"/>
    <property type="match status" value="1"/>
</dbReference>
<dbReference type="SUPFAM" id="SSF50447">
    <property type="entry name" value="Translation proteins"/>
    <property type="match status" value="1"/>
</dbReference>
<dbReference type="PROSITE" id="PS00301">
    <property type="entry name" value="G_TR_1"/>
    <property type="match status" value="1"/>
</dbReference>
<dbReference type="PROSITE" id="PS51722">
    <property type="entry name" value="G_TR_2"/>
    <property type="match status" value="1"/>
</dbReference>
<sequence length="413" mass="45120">HVDSGKSTTTGHLIYKCGGIDKRTIEKFEKEAQEMGKGSFKYAWVLDKLKAERERGITIDIALWKFETAKYYVTIIDAPGHRDFIKNMITGTSQADCAVLIVAAGTGEFEAGISKNGQTREHALLAFTLGVKQLIVGVNKMDSTEPPYSESRFEEIKKEVSSYIKKIGYNPAAVAFVPISGWHGDNMLEASTKMPWFKGWNVERKEGKAEGKCLIEALDAILPPARPTDKALRLPLQDVYKIGGIGTVPVGRVETGILKPGTIVVFAPANITTEVKSVEMHHEALQEAVPGDNVGFNVKNVSVKELRRGYVAGDSKNNPPKGAADFTAQVIVLNHPGQISNGYTPVLDCHTAHIACKFAEIKEKVDRRTGKSTEDNPKSIKSGDAAIVNLVPSKPLCVESFQEFPPLGRFAVR</sequence>